<keyword id="KW-0002">3D-structure</keyword>
<keyword id="KW-1185">Reference proteome</keyword>
<keyword id="KW-0687">Ribonucleoprotein</keyword>
<keyword id="KW-0689">Ribosomal protein</keyword>
<keyword id="KW-0694">RNA-binding</keyword>
<keyword id="KW-0699">rRNA-binding</keyword>
<name>RS181_MYCTU</name>
<organism>
    <name type="scientific">Mycobacterium tuberculosis (strain ATCC 25618 / H37Rv)</name>
    <dbReference type="NCBI Taxonomy" id="83332"/>
    <lineage>
        <taxon>Bacteria</taxon>
        <taxon>Bacillati</taxon>
        <taxon>Actinomycetota</taxon>
        <taxon>Actinomycetes</taxon>
        <taxon>Mycobacteriales</taxon>
        <taxon>Mycobacteriaceae</taxon>
        <taxon>Mycobacterium</taxon>
        <taxon>Mycobacterium tuberculosis complex</taxon>
    </lineage>
</organism>
<evidence type="ECO:0000255" key="1">
    <source>
        <dbReference type="HAMAP-Rule" id="MF_00270"/>
    </source>
</evidence>
<evidence type="ECO:0000305" key="2"/>
<dbReference type="EMBL" id="AL123456">
    <property type="protein sequence ID" value="CCP42777.1"/>
    <property type="molecule type" value="Genomic_DNA"/>
</dbReference>
<dbReference type="PIR" id="G70913">
    <property type="entry name" value="G70913"/>
</dbReference>
<dbReference type="RefSeq" id="WP_003400540.1">
    <property type="nucleotide sequence ID" value="NZ_NVQJ01000005.1"/>
</dbReference>
<dbReference type="RefSeq" id="YP_177688.1">
    <property type="nucleotide sequence ID" value="NC_000962.3"/>
</dbReference>
<dbReference type="PDB" id="5V93">
    <property type="method" value="EM"/>
    <property type="resolution" value="4.00 A"/>
    <property type="chains" value="r=1-84"/>
</dbReference>
<dbReference type="PDB" id="7KGB">
    <property type="method" value="EM"/>
    <property type="resolution" value="2.70 A"/>
    <property type="chains" value="r=1-84"/>
</dbReference>
<dbReference type="PDB" id="7MSC">
    <property type="method" value="EM"/>
    <property type="resolution" value="2.97 A"/>
    <property type="chains" value="r=1-84"/>
</dbReference>
<dbReference type="PDB" id="7MSH">
    <property type="method" value="EM"/>
    <property type="resolution" value="3.23 A"/>
    <property type="chains" value="r=1-84"/>
</dbReference>
<dbReference type="PDB" id="7MSM">
    <property type="method" value="EM"/>
    <property type="resolution" value="2.79 A"/>
    <property type="chains" value="r=1-84"/>
</dbReference>
<dbReference type="PDB" id="7MSZ">
    <property type="method" value="EM"/>
    <property type="resolution" value="3.10 A"/>
    <property type="chains" value="r=1-84"/>
</dbReference>
<dbReference type="PDB" id="7MT2">
    <property type="method" value="EM"/>
    <property type="resolution" value="2.76 A"/>
    <property type="chains" value="r=1-84"/>
</dbReference>
<dbReference type="PDB" id="7MT3">
    <property type="method" value="EM"/>
    <property type="resolution" value="2.80 A"/>
    <property type="chains" value="r=1-84"/>
</dbReference>
<dbReference type="PDB" id="7MT7">
    <property type="method" value="EM"/>
    <property type="resolution" value="2.71 A"/>
    <property type="chains" value="r=1-84"/>
</dbReference>
<dbReference type="PDB" id="7SFR">
    <property type="method" value="EM"/>
    <property type="resolution" value="2.60 A"/>
    <property type="chains" value="r=1-84"/>
</dbReference>
<dbReference type="PDBsum" id="5V93"/>
<dbReference type="PDBsum" id="7KGB"/>
<dbReference type="PDBsum" id="7MSC"/>
<dbReference type="PDBsum" id="7MSH"/>
<dbReference type="PDBsum" id="7MSM"/>
<dbReference type="PDBsum" id="7MSZ"/>
<dbReference type="PDBsum" id="7MT2"/>
<dbReference type="PDBsum" id="7MT3"/>
<dbReference type="PDBsum" id="7MT7"/>
<dbReference type="PDBsum" id="7SFR"/>
<dbReference type="EMDB" id="EMD-22865"/>
<dbReference type="EMDB" id="EMD-23961"/>
<dbReference type="EMDB" id="EMD-23962"/>
<dbReference type="EMDB" id="EMD-23969"/>
<dbReference type="EMDB" id="EMD-23972"/>
<dbReference type="EMDB" id="EMD-23974"/>
<dbReference type="EMDB" id="EMD-23975"/>
<dbReference type="EMDB" id="EMD-23976"/>
<dbReference type="EMDB" id="EMD-8645"/>
<dbReference type="SMR" id="P9WH49"/>
<dbReference type="FunCoup" id="P9WH49">
    <property type="interactions" value="234"/>
</dbReference>
<dbReference type="STRING" id="83332.Rv0055"/>
<dbReference type="PaxDb" id="83332-Rv0055"/>
<dbReference type="DNASU" id="887022"/>
<dbReference type="GeneID" id="45424014"/>
<dbReference type="GeneID" id="887022"/>
<dbReference type="KEGG" id="mtu:Rv0055"/>
<dbReference type="KEGG" id="mtv:RVBD_0055"/>
<dbReference type="TubercuList" id="Rv0055"/>
<dbReference type="eggNOG" id="COG0238">
    <property type="taxonomic scope" value="Bacteria"/>
</dbReference>
<dbReference type="InParanoid" id="P9WH49"/>
<dbReference type="OrthoDB" id="9812008at2"/>
<dbReference type="PhylomeDB" id="P9WH49"/>
<dbReference type="PRO" id="PR:P9WH49"/>
<dbReference type="Proteomes" id="UP000001584">
    <property type="component" value="Chromosome"/>
</dbReference>
<dbReference type="GO" id="GO:0022627">
    <property type="term" value="C:cytosolic small ribosomal subunit"/>
    <property type="evidence" value="ECO:0000318"/>
    <property type="project" value="GO_Central"/>
</dbReference>
<dbReference type="GO" id="GO:0070181">
    <property type="term" value="F:small ribosomal subunit rRNA binding"/>
    <property type="evidence" value="ECO:0000318"/>
    <property type="project" value="GO_Central"/>
</dbReference>
<dbReference type="GO" id="GO:0003735">
    <property type="term" value="F:structural constituent of ribosome"/>
    <property type="evidence" value="ECO:0000318"/>
    <property type="project" value="GO_Central"/>
</dbReference>
<dbReference type="GO" id="GO:0006412">
    <property type="term" value="P:translation"/>
    <property type="evidence" value="ECO:0000318"/>
    <property type="project" value="GO_Central"/>
</dbReference>
<dbReference type="FunFam" id="4.10.640.10:FF:000004">
    <property type="entry name" value="30S ribosomal protein S18"/>
    <property type="match status" value="1"/>
</dbReference>
<dbReference type="Gene3D" id="4.10.640.10">
    <property type="entry name" value="Ribosomal protein S18"/>
    <property type="match status" value="1"/>
</dbReference>
<dbReference type="HAMAP" id="MF_00270">
    <property type="entry name" value="Ribosomal_bS18"/>
    <property type="match status" value="1"/>
</dbReference>
<dbReference type="InterPro" id="IPR001648">
    <property type="entry name" value="Ribosomal_bS18"/>
</dbReference>
<dbReference type="InterPro" id="IPR018275">
    <property type="entry name" value="Ribosomal_bS18_CS"/>
</dbReference>
<dbReference type="InterPro" id="IPR036870">
    <property type="entry name" value="Ribosomal_bS18_sf"/>
</dbReference>
<dbReference type="NCBIfam" id="TIGR00165">
    <property type="entry name" value="S18"/>
    <property type="match status" value="1"/>
</dbReference>
<dbReference type="PANTHER" id="PTHR13479">
    <property type="entry name" value="30S RIBOSOMAL PROTEIN S18"/>
    <property type="match status" value="1"/>
</dbReference>
<dbReference type="PANTHER" id="PTHR13479:SF62">
    <property type="entry name" value="SMALL RIBOSOMAL SUBUNIT PROTEIN BS18A"/>
    <property type="match status" value="1"/>
</dbReference>
<dbReference type="Pfam" id="PF01084">
    <property type="entry name" value="Ribosomal_S18"/>
    <property type="match status" value="1"/>
</dbReference>
<dbReference type="PRINTS" id="PR00974">
    <property type="entry name" value="RIBOSOMALS18"/>
</dbReference>
<dbReference type="SUPFAM" id="SSF46911">
    <property type="entry name" value="Ribosomal protein S18"/>
    <property type="match status" value="1"/>
</dbReference>
<dbReference type="PROSITE" id="PS00057">
    <property type="entry name" value="RIBOSOMAL_S18"/>
    <property type="match status" value="1"/>
</dbReference>
<gene>
    <name evidence="1" type="primary">rpsR1</name>
    <name type="synonym">rpsR</name>
    <name type="ordered locus">Rv0055</name>
    <name type="ORF">MTCY21D4.18</name>
</gene>
<protein>
    <recommendedName>
        <fullName evidence="1">Small ribosomal subunit protein bS18A</fullName>
    </recommendedName>
    <alternativeName>
        <fullName evidence="2">30S ribosomal protein S18 1</fullName>
    </alternativeName>
</protein>
<comment type="function">
    <text evidence="1">Binds as a heterodimer with protein bS6 to the central domain of the 16S rRNA, where it helps stabilize the platform of the 30S subunit.</text>
</comment>
<comment type="subunit">
    <text evidence="1">Part of the 30S ribosomal subunit. Forms a tight heterodimer with protein bS6.</text>
</comment>
<comment type="similarity">
    <text evidence="1">Belongs to the bacterial ribosomal protein bS18 family.</text>
</comment>
<sequence length="84" mass="9543">MAKSSKRRPAPEKPVKTRKCVFCAKKDQAIDYKDTALLRTYISERGKIRARRVTGNCVQHQRDIALAVKNAREVALLPFTSSVR</sequence>
<feature type="chain" id="PRO_0000111190" description="Small ribosomal subunit protein bS18A">
    <location>
        <begin position="1"/>
        <end position="84"/>
    </location>
</feature>
<proteinExistence type="evidence at protein level"/>
<accession>P9WH49</accession>
<accession>L0T5D7</accession>
<accession>P69230</accession>
<accession>P71712</accession>
<reference key="1">
    <citation type="journal article" date="1998" name="Nature">
        <title>Deciphering the biology of Mycobacterium tuberculosis from the complete genome sequence.</title>
        <authorList>
            <person name="Cole S.T."/>
            <person name="Brosch R."/>
            <person name="Parkhill J."/>
            <person name="Garnier T."/>
            <person name="Churcher C.M."/>
            <person name="Harris D.E."/>
            <person name="Gordon S.V."/>
            <person name="Eiglmeier K."/>
            <person name="Gas S."/>
            <person name="Barry C.E. III"/>
            <person name="Tekaia F."/>
            <person name="Badcock K."/>
            <person name="Basham D."/>
            <person name="Brown D."/>
            <person name="Chillingworth T."/>
            <person name="Connor R."/>
            <person name="Davies R.M."/>
            <person name="Devlin K."/>
            <person name="Feltwell T."/>
            <person name="Gentles S."/>
            <person name="Hamlin N."/>
            <person name="Holroyd S."/>
            <person name="Hornsby T."/>
            <person name="Jagels K."/>
            <person name="Krogh A."/>
            <person name="McLean J."/>
            <person name="Moule S."/>
            <person name="Murphy L.D."/>
            <person name="Oliver S."/>
            <person name="Osborne J."/>
            <person name="Quail M.A."/>
            <person name="Rajandream M.A."/>
            <person name="Rogers J."/>
            <person name="Rutter S."/>
            <person name="Seeger K."/>
            <person name="Skelton S."/>
            <person name="Squares S."/>
            <person name="Squares R."/>
            <person name="Sulston J.E."/>
            <person name="Taylor K."/>
            <person name="Whitehead S."/>
            <person name="Barrell B.G."/>
        </authorList>
    </citation>
    <scope>NUCLEOTIDE SEQUENCE [LARGE SCALE GENOMIC DNA]</scope>
    <source>
        <strain>ATCC 25618 / H37Rv</strain>
    </source>
</reference>
<reference key="2">
    <citation type="journal article" date="2011" name="Mol. Cell. Proteomics">
        <title>Proteogenomic analysis of Mycobacterium tuberculosis by high resolution mass spectrometry.</title>
        <authorList>
            <person name="Kelkar D.S."/>
            <person name="Kumar D."/>
            <person name="Kumar P."/>
            <person name="Balakrishnan L."/>
            <person name="Muthusamy B."/>
            <person name="Yadav A.K."/>
            <person name="Shrivastava P."/>
            <person name="Marimuthu A."/>
            <person name="Anand S."/>
            <person name="Sundaram H."/>
            <person name="Kingsbury R."/>
            <person name="Harsha H.C."/>
            <person name="Nair B."/>
            <person name="Prasad T.S."/>
            <person name="Chauhan D.S."/>
            <person name="Katoch K."/>
            <person name="Katoch V.M."/>
            <person name="Kumar P."/>
            <person name="Chaerkady R."/>
            <person name="Ramachandran S."/>
            <person name="Dash D."/>
            <person name="Pandey A."/>
        </authorList>
    </citation>
    <scope>IDENTIFICATION BY MASS SPECTROMETRY [LARGE SCALE ANALYSIS]</scope>
    <source>
        <strain>ATCC 25618 / H37Rv</strain>
    </source>
</reference>